<feature type="chain" id="PRO_1000017583" description="Large ribosomal subunit protein bL27">
    <location>
        <begin position="1"/>
        <end position="87"/>
    </location>
</feature>
<feature type="region of interest" description="Disordered" evidence="2">
    <location>
        <begin position="1"/>
        <end position="25"/>
    </location>
</feature>
<feature type="compositionally biased region" description="Polar residues" evidence="2">
    <location>
        <begin position="7"/>
        <end position="19"/>
    </location>
</feature>
<sequence>MAHKKGASSSRNGRDSNAQRLGVKRFGGQSVSAGEILVRQRGTHFHPGVNVGRGGDDTLFALSAGAVEFGTKRGRKTVNIVPAAAEA</sequence>
<protein>
    <recommendedName>
        <fullName evidence="1">Large ribosomal subunit protein bL27</fullName>
    </recommendedName>
    <alternativeName>
        <fullName evidence="3">50S ribosomal protein L27</fullName>
    </alternativeName>
</protein>
<dbReference type="EMBL" id="CP000431">
    <property type="protein sequence ID" value="ABG93136.1"/>
    <property type="molecule type" value="Genomic_DNA"/>
</dbReference>
<dbReference type="RefSeq" id="WP_005248077.1">
    <property type="nucleotide sequence ID" value="NC_008268.1"/>
</dbReference>
<dbReference type="SMR" id="Q0SH50"/>
<dbReference type="GeneID" id="69892973"/>
<dbReference type="KEGG" id="rha:RHA1_ro01312"/>
<dbReference type="eggNOG" id="COG0211">
    <property type="taxonomic scope" value="Bacteria"/>
</dbReference>
<dbReference type="HOGENOM" id="CLU_095424_4_0_11"/>
<dbReference type="OrthoDB" id="9803474at2"/>
<dbReference type="Proteomes" id="UP000008710">
    <property type="component" value="Chromosome"/>
</dbReference>
<dbReference type="GO" id="GO:0022625">
    <property type="term" value="C:cytosolic large ribosomal subunit"/>
    <property type="evidence" value="ECO:0007669"/>
    <property type="project" value="TreeGrafter"/>
</dbReference>
<dbReference type="GO" id="GO:0003735">
    <property type="term" value="F:structural constituent of ribosome"/>
    <property type="evidence" value="ECO:0007669"/>
    <property type="project" value="InterPro"/>
</dbReference>
<dbReference type="GO" id="GO:0006412">
    <property type="term" value="P:translation"/>
    <property type="evidence" value="ECO:0007669"/>
    <property type="project" value="UniProtKB-UniRule"/>
</dbReference>
<dbReference type="FunFam" id="2.40.50.100:FF:000020">
    <property type="entry name" value="50S ribosomal protein L27"/>
    <property type="match status" value="1"/>
</dbReference>
<dbReference type="Gene3D" id="2.40.50.100">
    <property type="match status" value="1"/>
</dbReference>
<dbReference type="HAMAP" id="MF_00539">
    <property type="entry name" value="Ribosomal_bL27"/>
    <property type="match status" value="1"/>
</dbReference>
<dbReference type="InterPro" id="IPR001684">
    <property type="entry name" value="Ribosomal_bL27"/>
</dbReference>
<dbReference type="InterPro" id="IPR018261">
    <property type="entry name" value="Ribosomal_bL27_CS"/>
</dbReference>
<dbReference type="NCBIfam" id="TIGR00062">
    <property type="entry name" value="L27"/>
    <property type="match status" value="1"/>
</dbReference>
<dbReference type="PANTHER" id="PTHR15893:SF0">
    <property type="entry name" value="LARGE RIBOSOMAL SUBUNIT PROTEIN BL27M"/>
    <property type="match status" value="1"/>
</dbReference>
<dbReference type="PANTHER" id="PTHR15893">
    <property type="entry name" value="RIBOSOMAL PROTEIN L27"/>
    <property type="match status" value="1"/>
</dbReference>
<dbReference type="Pfam" id="PF01016">
    <property type="entry name" value="Ribosomal_L27"/>
    <property type="match status" value="1"/>
</dbReference>
<dbReference type="PRINTS" id="PR00063">
    <property type="entry name" value="RIBOSOMALL27"/>
</dbReference>
<dbReference type="SUPFAM" id="SSF110324">
    <property type="entry name" value="Ribosomal L27 protein-like"/>
    <property type="match status" value="1"/>
</dbReference>
<dbReference type="PROSITE" id="PS00831">
    <property type="entry name" value="RIBOSOMAL_L27"/>
    <property type="match status" value="1"/>
</dbReference>
<comment type="similarity">
    <text evidence="1">Belongs to the bacterial ribosomal protein bL27 family.</text>
</comment>
<proteinExistence type="inferred from homology"/>
<reference key="1">
    <citation type="journal article" date="2006" name="Proc. Natl. Acad. Sci. U.S.A.">
        <title>The complete genome of Rhodococcus sp. RHA1 provides insights into a catabolic powerhouse.</title>
        <authorList>
            <person name="McLeod M.P."/>
            <person name="Warren R.L."/>
            <person name="Hsiao W.W.L."/>
            <person name="Araki N."/>
            <person name="Myhre M."/>
            <person name="Fernandes C."/>
            <person name="Miyazawa D."/>
            <person name="Wong W."/>
            <person name="Lillquist A.L."/>
            <person name="Wang D."/>
            <person name="Dosanjh M."/>
            <person name="Hara H."/>
            <person name="Petrescu A."/>
            <person name="Morin R.D."/>
            <person name="Yang G."/>
            <person name="Stott J.M."/>
            <person name="Schein J.E."/>
            <person name="Shin H."/>
            <person name="Smailus D."/>
            <person name="Siddiqui A.S."/>
            <person name="Marra M.A."/>
            <person name="Jones S.J.M."/>
            <person name="Holt R."/>
            <person name="Brinkman F.S.L."/>
            <person name="Miyauchi K."/>
            <person name="Fukuda M."/>
            <person name="Davies J.E."/>
            <person name="Mohn W.W."/>
            <person name="Eltis L.D."/>
        </authorList>
    </citation>
    <scope>NUCLEOTIDE SEQUENCE [LARGE SCALE GENOMIC DNA]</scope>
    <source>
        <strain>RHA1</strain>
    </source>
</reference>
<keyword id="KW-0687">Ribonucleoprotein</keyword>
<keyword id="KW-0689">Ribosomal protein</keyword>
<name>RL27_RHOJR</name>
<organism>
    <name type="scientific">Rhodococcus jostii (strain RHA1)</name>
    <dbReference type="NCBI Taxonomy" id="101510"/>
    <lineage>
        <taxon>Bacteria</taxon>
        <taxon>Bacillati</taxon>
        <taxon>Actinomycetota</taxon>
        <taxon>Actinomycetes</taxon>
        <taxon>Mycobacteriales</taxon>
        <taxon>Nocardiaceae</taxon>
        <taxon>Rhodococcus</taxon>
    </lineage>
</organism>
<gene>
    <name evidence="1" type="primary">rpmA</name>
    <name type="ordered locus">RHA1_ro01312</name>
</gene>
<accession>Q0SH50</accession>
<evidence type="ECO:0000255" key="1">
    <source>
        <dbReference type="HAMAP-Rule" id="MF_00539"/>
    </source>
</evidence>
<evidence type="ECO:0000256" key="2">
    <source>
        <dbReference type="SAM" id="MobiDB-lite"/>
    </source>
</evidence>
<evidence type="ECO:0000305" key="3"/>